<gene>
    <name evidence="1" type="primary">rpsM</name>
    <name type="ordered locus">BR1211</name>
    <name type="ordered locus">BS1330_I1207</name>
</gene>
<evidence type="ECO:0000255" key="1">
    <source>
        <dbReference type="HAMAP-Rule" id="MF_01315"/>
    </source>
</evidence>
<evidence type="ECO:0000256" key="2">
    <source>
        <dbReference type="SAM" id="MobiDB-lite"/>
    </source>
</evidence>
<evidence type="ECO:0000305" key="3"/>
<feature type="chain" id="PRO_0000132071" description="Small ribosomal subunit protein uS13">
    <location>
        <begin position="1"/>
        <end position="122"/>
    </location>
</feature>
<feature type="region of interest" description="Disordered" evidence="2">
    <location>
        <begin position="97"/>
        <end position="122"/>
    </location>
</feature>
<sequence length="122" mass="13769">MARIAGVNIPTNKRVNIALQYIHGIGPKFAREIVTKVGIADDRRVNQLSDAEVLQIREAIDADYQVEGDLRREVSMNIKRLMDLGCYRGLRHRRSLPVRGQRTHTNARTRKGPAKAIAGKKK</sequence>
<protein>
    <recommendedName>
        <fullName evidence="1">Small ribosomal subunit protein uS13</fullName>
    </recommendedName>
    <alternativeName>
        <fullName evidence="3">30S ribosomal protein S13</fullName>
    </alternativeName>
</protein>
<dbReference type="EMBL" id="AE014291">
    <property type="protein sequence ID" value="AAN30130.1"/>
    <property type="molecule type" value="Genomic_DNA"/>
</dbReference>
<dbReference type="EMBL" id="CP002997">
    <property type="protein sequence ID" value="AEM18548.1"/>
    <property type="molecule type" value="Genomic_DNA"/>
</dbReference>
<dbReference type="RefSeq" id="WP_002964340.1">
    <property type="nucleotide sequence ID" value="NZ_KN046804.1"/>
</dbReference>
<dbReference type="SMR" id="P66382"/>
<dbReference type="GeneID" id="97533546"/>
<dbReference type="KEGG" id="bms:BR1211"/>
<dbReference type="KEGG" id="bsi:BS1330_I1207"/>
<dbReference type="PATRIC" id="fig|204722.21.peg.2265"/>
<dbReference type="HOGENOM" id="CLU_103849_1_2_5"/>
<dbReference type="PhylomeDB" id="P66382"/>
<dbReference type="Proteomes" id="UP000007104">
    <property type="component" value="Chromosome I"/>
</dbReference>
<dbReference type="GO" id="GO:0005829">
    <property type="term" value="C:cytosol"/>
    <property type="evidence" value="ECO:0007669"/>
    <property type="project" value="TreeGrafter"/>
</dbReference>
<dbReference type="GO" id="GO:0015935">
    <property type="term" value="C:small ribosomal subunit"/>
    <property type="evidence" value="ECO:0007669"/>
    <property type="project" value="TreeGrafter"/>
</dbReference>
<dbReference type="GO" id="GO:0019843">
    <property type="term" value="F:rRNA binding"/>
    <property type="evidence" value="ECO:0007669"/>
    <property type="project" value="UniProtKB-UniRule"/>
</dbReference>
<dbReference type="GO" id="GO:0003735">
    <property type="term" value="F:structural constituent of ribosome"/>
    <property type="evidence" value="ECO:0007669"/>
    <property type="project" value="InterPro"/>
</dbReference>
<dbReference type="GO" id="GO:0000049">
    <property type="term" value="F:tRNA binding"/>
    <property type="evidence" value="ECO:0007669"/>
    <property type="project" value="UniProtKB-UniRule"/>
</dbReference>
<dbReference type="GO" id="GO:0006412">
    <property type="term" value="P:translation"/>
    <property type="evidence" value="ECO:0007669"/>
    <property type="project" value="UniProtKB-UniRule"/>
</dbReference>
<dbReference type="FunFam" id="1.10.8.50:FF:000001">
    <property type="entry name" value="30S ribosomal protein S13"/>
    <property type="match status" value="1"/>
</dbReference>
<dbReference type="FunFam" id="4.10.910.10:FF:000001">
    <property type="entry name" value="30S ribosomal protein S13"/>
    <property type="match status" value="1"/>
</dbReference>
<dbReference type="Gene3D" id="1.10.8.50">
    <property type="match status" value="1"/>
</dbReference>
<dbReference type="Gene3D" id="4.10.910.10">
    <property type="entry name" value="30s ribosomal protein s13, domain 2"/>
    <property type="match status" value="1"/>
</dbReference>
<dbReference type="HAMAP" id="MF_01315">
    <property type="entry name" value="Ribosomal_uS13"/>
    <property type="match status" value="1"/>
</dbReference>
<dbReference type="InterPro" id="IPR027437">
    <property type="entry name" value="Rbsml_uS13_C"/>
</dbReference>
<dbReference type="InterPro" id="IPR001892">
    <property type="entry name" value="Ribosomal_uS13"/>
</dbReference>
<dbReference type="InterPro" id="IPR010979">
    <property type="entry name" value="Ribosomal_uS13-like_H2TH"/>
</dbReference>
<dbReference type="InterPro" id="IPR019980">
    <property type="entry name" value="Ribosomal_uS13_bac-type"/>
</dbReference>
<dbReference type="InterPro" id="IPR018269">
    <property type="entry name" value="Ribosomal_uS13_CS"/>
</dbReference>
<dbReference type="NCBIfam" id="TIGR03631">
    <property type="entry name" value="uS13_bact"/>
    <property type="match status" value="1"/>
</dbReference>
<dbReference type="PANTHER" id="PTHR10871">
    <property type="entry name" value="30S RIBOSOMAL PROTEIN S13/40S RIBOSOMAL PROTEIN S18"/>
    <property type="match status" value="1"/>
</dbReference>
<dbReference type="PANTHER" id="PTHR10871:SF1">
    <property type="entry name" value="SMALL RIBOSOMAL SUBUNIT PROTEIN US13M"/>
    <property type="match status" value="1"/>
</dbReference>
<dbReference type="Pfam" id="PF00416">
    <property type="entry name" value="Ribosomal_S13"/>
    <property type="match status" value="1"/>
</dbReference>
<dbReference type="PIRSF" id="PIRSF002134">
    <property type="entry name" value="Ribosomal_S13"/>
    <property type="match status" value="1"/>
</dbReference>
<dbReference type="SUPFAM" id="SSF46946">
    <property type="entry name" value="S13-like H2TH domain"/>
    <property type="match status" value="1"/>
</dbReference>
<dbReference type="PROSITE" id="PS00646">
    <property type="entry name" value="RIBOSOMAL_S13_1"/>
    <property type="match status" value="1"/>
</dbReference>
<dbReference type="PROSITE" id="PS50159">
    <property type="entry name" value="RIBOSOMAL_S13_2"/>
    <property type="match status" value="1"/>
</dbReference>
<reference key="1">
    <citation type="journal article" date="2002" name="Proc. Natl. Acad. Sci. U.S.A.">
        <title>The Brucella suis genome reveals fundamental similarities between animal and plant pathogens and symbionts.</title>
        <authorList>
            <person name="Paulsen I.T."/>
            <person name="Seshadri R."/>
            <person name="Nelson K.E."/>
            <person name="Eisen J.A."/>
            <person name="Heidelberg J.F."/>
            <person name="Read T.D."/>
            <person name="Dodson R.J."/>
            <person name="Umayam L.A."/>
            <person name="Brinkac L.M."/>
            <person name="Beanan M.J."/>
            <person name="Daugherty S.C."/>
            <person name="DeBoy R.T."/>
            <person name="Durkin A.S."/>
            <person name="Kolonay J.F."/>
            <person name="Madupu R."/>
            <person name="Nelson W.C."/>
            <person name="Ayodeji B."/>
            <person name="Kraul M."/>
            <person name="Shetty J."/>
            <person name="Malek J.A."/>
            <person name="Van Aken S.E."/>
            <person name="Riedmuller S."/>
            <person name="Tettelin H."/>
            <person name="Gill S.R."/>
            <person name="White O."/>
            <person name="Salzberg S.L."/>
            <person name="Hoover D.L."/>
            <person name="Lindler L.E."/>
            <person name="Halling S.M."/>
            <person name="Boyle S.M."/>
            <person name="Fraser C.M."/>
        </authorList>
    </citation>
    <scope>NUCLEOTIDE SEQUENCE [LARGE SCALE GENOMIC DNA]</scope>
    <source>
        <strain>1330</strain>
    </source>
</reference>
<reference key="2">
    <citation type="journal article" date="2011" name="J. Bacteriol.">
        <title>Revised genome sequence of Brucella suis 1330.</title>
        <authorList>
            <person name="Tae H."/>
            <person name="Shallom S."/>
            <person name="Settlage R."/>
            <person name="Preston D."/>
            <person name="Adams L.G."/>
            <person name="Garner H.R."/>
        </authorList>
    </citation>
    <scope>NUCLEOTIDE SEQUENCE [LARGE SCALE GENOMIC DNA]</scope>
    <source>
        <strain>1330</strain>
    </source>
</reference>
<accession>P66382</accession>
<accession>G0KAD2</accession>
<accession>Q8G093</accession>
<accession>Q8YHL8</accession>
<name>RS13_BRUSU</name>
<keyword id="KW-0687">Ribonucleoprotein</keyword>
<keyword id="KW-0689">Ribosomal protein</keyword>
<keyword id="KW-0694">RNA-binding</keyword>
<keyword id="KW-0699">rRNA-binding</keyword>
<keyword id="KW-0820">tRNA-binding</keyword>
<proteinExistence type="inferred from homology"/>
<organism>
    <name type="scientific">Brucella suis biovar 1 (strain 1330)</name>
    <dbReference type="NCBI Taxonomy" id="204722"/>
    <lineage>
        <taxon>Bacteria</taxon>
        <taxon>Pseudomonadati</taxon>
        <taxon>Pseudomonadota</taxon>
        <taxon>Alphaproteobacteria</taxon>
        <taxon>Hyphomicrobiales</taxon>
        <taxon>Brucellaceae</taxon>
        <taxon>Brucella/Ochrobactrum group</taxon>
        <taxon>Brucella</taxon>
    </lineage>
</organism>
<comment type="function">
    <text evidence="1">Located at the top of the head of the 30S subunit, it contacts several helices of the 16S rRNA. In the 70S ribosome it contacts the 23S rRNA (bridge B1a) and protein L5 of the 50S subunit (bridge B1b), connecting the 2 subunits; these bridges are implicated in subunit movement. Contacts the tRNAs in the A and P-sites.</text>
</comment>
<comment type="subunit">
    <text evidence="1">Part of the 30S ribosomal subunit. Forms a loose heterodimer with protein S19. Forms two bridges to the 50S subunit in the 70S ribosome.</text>
</comment>
<comment type="similarity">
    <text evidence="1">Belongs to the universal ribosomal protein uS13 family.</text>
</comment>